<accession>F1RCE7</accession>
<accession>B5RHZ5</accession>
<accession>F1R397</accession>
<accession>Q5PQY8</accession>
<protein>
    <recommendedName>
        <fullName>Mitochondrial fission regulator 1</fullName>
    </recommendedName>
</protein>
<proteinExistence type="evidence at transcript level"/>
<sequence length="318" mass="35169">MSRNHRRIEMDLAVGSSSKHYGSSRSIVRRIATNLPLAPCPRVHFQLHPFASGASFLNSPNGPNVATLADVAWIDREESDGPGRIRCEADSGLVFRTQERRPLRRQRSLPSLHQVEPAQQSQTVINDEAIQKISVLETELAKLRAQIAQIVQAQEQSAQSTAPAPGGPPVPPPMVPVPPPPPPPPPCPTPSMQRSYSAIDLIRERRGKKAEQNTVLDSAPKKPELPNMLDVLKDMGKVKLRSVKSHQEDGNVKAKPVEPTDAAAMIAEALKRKFAHRYRNDSECDGTFTFTAFENKPHVETPLFGQHMLKSTGRRKMH</sequence>
<reference key="1">
    <citation type="journal article" date="2013" name="Nature">
        <title>The zebrafish reference genome sequence and its relationship to the human genome.</title>
        <authorList>
            <person name="Howe K."/>
            <person name="Clark M.D."/>
            <person name="Torroja C.F."/>
            <person name="Torrance J."/>
            <person name="Berthelot C."/>
            <person name="Muffato M."/>
            <person name="Collins J.E."/>
            <person name="Humphray S."/>
            <person name="McLaren K."/>
            <person name="Matthews L."/>
            <person name="McLaren S."/>
            <person name="Sealy I."/>
            <person name="Caccamo M."/>
            <person name="Churcher C."/>
            <person name="Scott C."/>
            <person name="Barrett J.C."/>
            <person name="Koch R."/>
            <person name="Rauch G.J."/>
            <person name="White S."/>
            <person name="Chow W."/>
            <person name="Kilian B."/>
            <person name="Quintais L.T."/>
            <person name="Guerra-Assuncao J.A."/>
            <person name="Zhou Y."/>
            <person name="Gu Y."/>
            <person name="Yen J."/>
            <person name="Vogel J.H."/>
            <person name="Eyre T."/>
            <person name="Redmond S."/>
            <person name="Banerjee R."/>
            <person name="Chi J."/>
            <person name="Fu B."/>
            <person name="Langley E."/>
            <person name="Maguire S.F."/>
            <person name="Laird G.K."/>
            <person name="Lloyd D."/>
            <person name="Kenyon E."/>
            <person name="Donaldson S."/>
            <person name="Sehra H."/>
            <person name="Almeida-King J."/>
            <person name="Loveland J."/>
            <person name="Trevanion S."/>
            <person name="Jones M."/>
            <person name="Quail M."/>
            <person name="Willey D."/>
            <person name="Hunt A."/>
            <person name="Burton J."/>
            <person name="Sims S."/>
            <person name="McLay K."/>
            <person name="Plumb B."/>
            <person name="Davis J."/>
            <person name="Clee C."/>
            <person name="Oliver K."/>
            <person name="Clark R."/>
            <person name="Riddle C."/>
            <person name="Elliot D."/>
            <person name="Threadgold G."/>
            <person name="Harden G."/>
            <person name="Ware D."/>
            <person name="Begum S."/>
            <person name="Mortimore B."/>
            <person name="Kerry G."/>
            <person name="Heath P."/>
            <person name="Phillimore B."/>
            <person name="Tracey A."/>
            <person name="Corby N."/>
            <person name="Dunn M."/>
            <person name="Johnson C."/>
            <person name="Wood J."/>
            <person name="Clark S."/>
            <person name="Pelan S."/>
            <person name="Griffiths G."/>
            <person name="Smith M."/>
            <person name="Glithero R."/>
            <person name="Howden P."/>
            <person name="Barker N."/>
            <person name="Lloyd C."/>
            <person name="Stevens C."/>
            <person name="Harley J."/>
            <person name="Holt K."/>
            <person name="Panagiotidis G."/>
            <person name="Lovell J."/>
            <person name="Beasley H."/>
            <person name="Henderson C."/>
            <person name="Gordon D."/>
            <person name="Auger K."/>
            <person name="Wright D."/>
            <person name="Collins J."/>
            <person name="Raisen C."/>
            <person name="Dyer L."/>
            <person name="Leung K."/>
            <person name="Robertson L."/>
            <person name="Ambridge K."/>
            <person name="Leongamornlert D."/>
            <person name="McGuire S."/>
            <person name="Gilderthorp R."/>
            <person name="Griffiths C."/>
            <person name="Manthravadi D."/>
            <person name="Nichol S."/>
            <person name="Barker G."/>
            <person name="Whitehead S."/>
            <person name="Kay M."/>
            <person name="Brown J."/>
            <person name="Murnane C."/>
            <person name="Gray E."/>
            <person name="Humphries M."/>
            <person name="Sycamore N."/>
            <person name="Barker D."/>
            <person name="Saunders D."/>
            <person name="Wallis J."/>
            <person name="Babbage A."/>
            <person name="Hammond S."/>
            <person name="Mashreghi-Mohammadi M."/>
            <person name="Barr L."/>
            <person name="Martin S."/>
            <person name="Wray P."/>
            <person name="Ellington A."/>
            <person name="Matthews N."/>
            <person name="Ellwood M."/>
            <person name="Woodmansey R."/>
            <person name="Clark G."/>
            <person name="Cooper J."/>
            <person name="Tromans A."/>
            <person name="Grafham D."/>
            <person name="Skuce C."/>
            <person name="Pandian R."/>
            <person name="Andrews R."/>
            <person name="Harrison E."/>
            <person name="Kimberley A."/>
            <person name="Garnett J."/>
            <person name="Fosker N."/>
            <person name="Hall R."/>
            <person name="Garner P."/>
            <person name="Kelly D."/>
            <person name="Bird C."/>
            <person name="Palmer S."/>
            <person name="Gehring I."/>
            <person name="Berger A."/>
            <person name="Dooley C.M."/>
            <person name="Ersan-Urun Z."/>
            <person name="Eser C."/>
            <person name="Geiger H."/>
            <person name="Geisler M."/>
            <person name="Karotki L."/>
            <person name="Kirn A."/>
            <person name="Konantz J."/>
            <person name="Konantz M."/>
            <person name="Oberlander M."/>
            <person name="Rudolph-Geiger S."/>
            <person name="Teucke M."/>
            <person name="Lanz C."/>
            <person name="Raddatz G."/>
            <person name="Osoegawa K."/>
            <person name="Zhu B."/>
            <person name="Rapp A."/>
            <person name="Widaa S."/>
            <person name="Langford C."/>
            <person name="Yang F."/>
            <person name="Schuster S.C."/>
            <person name="Carter N.P."/>
            <person name="Harrow J."/>
            <person name="Ning Z."/>
            <person name="Herrero J."/>
            <person name="Searle S.M."/>
            <person name="Enright A."/>
            <person name="Geisler R."/>
            <person name="Plasterk R.H."/>
            <person name="Lee C."/>
            <person name="Westerfield M."/>
            <person name="de Jong P.J."/>
            <person name="Zon L.I."/>
            <person name="Postlethwait J.H."/>
            <person name="Nusslein-Volhard C."/>
            <person name="Hubbard T.J."/>
            <person name="Roest Crollius H."/>
            <person name="Rogers J."/>
            <person name="Stemple D.L."/>
        </authorList>
    </citation>
    <scope>NUCLEOTIDE SEQUENCE [LARGE SCALE GENOMIC DNA]</scope>
    <source>
        <strain>Tuebingen</strain>
    </source>
</reference>
<reference key="2">
    <citation type="submission" date="2004-12" db="EMBL/GenBank/DDBJ databases">
        <authorList>
            <consortium name="NIH - Zebrafish Gene Collection (ZGC) project"/>
        </authorList>
    </citation>
    <scope>NUCLEOTIDE SEQUENCE [LARGE SCALE MRNA] (ISOFORMS 1 AND 2)</scope>
    <source>
        <tissue>Ovary</tissue>
    </source>
</reference>
<dbReference type="EMBL" id="CU019631">
    <property type="status" value="NOT_ANNOTATED_CDS"/>
    <property type="molecule type" value="Genomic_DNA"/>
</dbReference>
<dbReference type="EMBL" id="BC086966">
    <property type="protein sequence ID" value="AAH86966.1"/>
    <property type="molecule type" value="mRNA"/>
</dbReference>
<dbReference type="EMBL" id="BC169195">
    <property type="protein sequence ID" value="AAI69195.1"/>
    <property type="molecule type" value="mRNA"/>
</dbReference>
<dbReference type="RefSeq" id="NP_001008578.1">
    <property type="nucleotide sequence ID" value="NM_001008578.1"/>
</dbReference>
<dbReference type="SMR" id="F1RCE7"/>
<dbReference type="FunCoup" id="F1RCE7">
    <property type="interactions" value="985"/>
</dbReference>
<dbReference type="STRING" id="7955.ENSDARP00000066627"/>
<dbReference type="PaxDb" id="7955-ENSDARP00000108672"/>
<dbReference type="Ensembl" id="ENSDART00000066628">
    <molecule id="F1RCE7-1"/>
    <property type="protein sequence ID" value="ENSDARP00000066627"/>
    <property type="gene ID" value="ENSDARG00000045304"/>
</dbReference>
<dbReference type="GeneID" id="494035"/>
<dbReference type="KEGG" id="dre:494035"/>
<dbReference type="AGR" id="ZFIN:ZDB-GENE-041212-86"/>
<dbReference type="CTD" id="9650"/>
<dbReference type="ZFIN" id="ZDB-GENE-041212-86">
    <property type="gene designation" value="mtfr1"/>
</dbReference>
<dbReference type="eggNOG" id="ENOG502QSSN">
    <property type="taxonomic scope" value="Eukaryota"/>
</dbReference>
<dbReference type="HOGENOM" id="CLU_117246_0_0_1"/>
<dbReference type="InParanoid" id="F1RCE7"/>
<dbReference type="OMA" id="CPRIHFQ"/>
<dbReference type="OrthoDB" id="2133332at2759"/>
<dbReference type="TreeFam" id="TF331404"/>
<dbReference type="PRO" id="PR:F1RCE7"/>
<dbReference type="Proteomes" id="UP000000437">
    <property type="component" value="Chromosome 24"/>
</dbReference>
<dbReference type="Bgee" id="ENSDARG00000045304">
    <property type="expression patterns" value="Expressed in mature ovarian follicle and 25 other cell types or tissues"/>
</dbReference>
<dbReference type="GO" id="GO:0005739">
    <property type="term" value="C:mitochondrion"/>
    <property type="evidence" value="ECO:0000250"/>
    <property type="project" value="UniProtKB"/>
</dbReference>
<dbReference type="GO" id="GO:0009060">
    <property type="term" value="P:aerobic respiration"/>
    <property type="evidence" value="ECO:0000250"/>
    <property type="project" value="UniProtKB"/>
</dbReference>
<dbReference type="GO" id="GO:0000266">
    <property type="term" value="P:mitochondrial fission"/>
    <property type="evidence" value="ECO:0000250"/>
    <property type="project" value="UniProtKB"/>
</dbReference>
<dbReference type="GO" id="GO:0007005">
    <property type="term" value="P:mitochondrion organization"/>
    <property type="evidence" value="ECO:0000250"/>
    <property type="project" value="UniProtKB"/>
</dbReference>
<dbReference type="InterPro" id="IPR007972">
    <property type="entry name" value="Mtfr1"/>
</dbReference>
<dbReference type="PANTHER" id="PTHR14215:SF1">
    <property type="entry name" value="MITOCHONDRIAL FISSION REGULATOR 1"/>
    <property type="match status" value="1"/>
</dbReference>
<dbReference type="PANTHER" id="PTHR14215">
    <property type="entry name" value="PROTEIN OF UNKNOWN FUNCTION DUF729"/>
    <property type="match status" value="1"/>
</dbReference>
<dbReference type="Pfam" id="PF05308">
    <property type="entry name" value="Mito_fiss_reg"/>
    <property type="match status" value="1"/>
</dbReference>
<comment type="function">
    <text evidence="1">May play a role in mitochondrial aerobic respiration. May also regulate mitochondrial organization and fission (By similarity).</text>
</comment>
<comment type="subcellular location">
    <subcellularLocation>
        <location evidence="1">Mitochondrion</location>
    </subcellularLocation>
</comment>
<comment type="alternative products">
    <event type="alternative splicing"/>
    <isoform>
        <id>F1RCE7-1</id>
        <name>1</name>
        <sequence type="displayed"/>
    </isoform>
    <isoform>
        <id>F1RCE7-2</id>
        <name>2</name>
        <sequence type="described" ref="VSP_043776 VSP_043777"/>
    </isoform>
</comment>
<comment type="similarity">
    <text evidence="5">Belongs to the MTFR1 family.</text>
</comment>
<organism>
    <name type="scientific">Danio rerio</name>
    <name type="common">Zebrafish</name>
    <name type="synonym">Brachydanio rerio</name>
    <dbReference type="NCBI Taxonomy" id="7955"/>
    <lineage>
        <taxon>Eukaryota</taxon>
        <taxon>Metazoa</taxon>
        <taxon>Chordata</taxon>
        <taxon>Craniata</taxon>
        <taxon>Vertebrata</taxon>
        <taxon>Euteleostomi</taxon>
        <taxon>Actinopterygii</taxon>
        <taxon>Neopterygii</taxon>
        <taxon>Teleostei</taxon>
        <taxon>Ostariophysi</taxon>
        <taxon>Cypriniformes</taxon>
        <taxon>Danionidae</taxon>
        <taxon>Danioninae</taxon>
        <taxon>Danio</taxon>
    </lineage>
</organism>
<name>MTFR1_DANRE</name>
<gene>
    <name type="primary">mtfr1</name>
    <name type="ORF">zgc:92267</name>
</gene>
<keyword id="KW-0025">Alternative splicing</keyword>
<keyword id="KW-0175">Coiled coil</keyword>
<keyword id="KW-0496">Mitochondrion</keyword>
<keyword id="KW-1185">Reference proteome</keyword>
<keyword id="KW-0809">Transit peptide</keyword>
<evidence type="ECO:0000250" key="1"/>
<evidence type="ECO:0000255" key="2"/>
<evidence type="ECO:0000256" key="3">
    <source>
        <dbReference type="SAM" id="MobiDB-lite"/>
    </source>
</evidence>
<evidence type="ECO:0000303" key="4">
    <source ref="2"/>
</evidence>
<evidence type="ECO:0000305" key="5"/>
<feature type="transit peptide" description="Mitochondrion" evidence="2">
    <location>
        <begin position="1"/>
        <end status="unknown"/>
    </location>
</feature>
<feature type="chain" id="PRO_0000417557" description="Mitochondrial fission regulator 1">
    <location>
        <begin status="unknown"/>
        <end position="318"/>
    </location>
</feature>
<feature type="region of interest" description="Disordered" evidence="3">
    <location>
        <begin position="101"/>
        <end position="121"/>
    </location>
</feature>
<feature type="region of interest" description="Disordered" evidence="3">
    <location>
        <begin position="154"/>
        <end position="193"/>
    </location>
</feature>
<feature type="region of interest" description="Necessary and sufficient to promote mitochondrial fission" evidence="1">
    <location>
        <begin position="168"/>
        <end position="296"/>
    </location>
</feature>
<feature type="coiled-coil region" evidence="2">
    <location>
        <begin position="124"/>
        <end position="157"/>
    </location>
</feature>
<feature type="compositionally biased region" description="Low complexity" evidence="3">
    <location>
        <begin position="154"/>
        <end position="164"/>
    </location>
</feature>
<feature type="compositionally biased region" description="Pro residues" evidence="3">
    <location>
        <begin position="165"/>
        <end position="189"/>
    </location>
</feature>
<feature type="splice variant" id="VSP_043776" description="In isoform 2." evidence="4">
    <original>A</original>
    <variation>G</variation>
    <location>
        <position position="162"/>
    </location>
</feature>
<feature type="splice variant" id="VSP_043777" description="In isoform 2." evidence="4">
    <location>
        <begin position="163"/>
        <end position="318"/>
    </location>
</feature>
<feature type="sequence conflict" description="In Ref. 2; AAH86966/AAI69195." evidence="5" ref="2">
    <original>S</original>
    <variation>P</variation>
    <location>
        <position position="17"/>
    </location>
</feature>
<feature type="sequence conflict" description="In Ref. 2; AAH86966/AAI69195." evidence="5" ref="2">
    <original>H</original>
    <variation>D</variation>
    <location>
        <position position="20"/>
    </location>
</feature>
<feature type="sequence conflict" description="In Ref. 2; AAH86966." evidence="5" ref="2">
    <original>F</original>
    <variation>S</variation>
    <location>
        <position position="293"/>
    </location>
</feature>